<reference evidence="10" key="1">
    <citation type="journal article" date="2011" name="Neuron">
        <title>Functional architecture of olfactory ionotropic glutamate receptors.</title>
        <authorList>
            <person name="Abuin L."/>
            <person name="Bargeton B."/>
            <person name="Ulbrich M.H."/>
            <person name="Isacoff E.Y."/>
            <person name="Kellenberger S."/>
            <person name="Benton R."/>
        </authorList>
    </citation>
    <scope>NUCLEOTIDE SEQUENCE [MRNA]</scope>
    <scope>FUNCTION</scope>
    <scope>TISSUE SPECIFICITY</scope>
    <scope>DISRUPTION PHENOTYPE</scope>
</reference>
<reference evidence="12" key="2">
    <citation type="journal article" date="2000" name="Science">
        <title>The genome sequence of Drosophila melanogaster.</title>
        <authorList>
            <person name="Adams M.D."/>
            <person name="Celniker S.E."/>
            <person name="Holt R.A."/>
            <person name="Evans C.A."/>
            <person name="Gocayne J.D."/>
            <person name="Amanatides P.G."/>
            <person name="Scherer S.E."/>
            <person name="Li P.W."/>
            <person name="Hoskins R.A."/>
            <person name="Galle R.F."/>
            <person name="George R.A."/>
            <person name="Lewis S.E."/>
            <person name="Richards S."/>
            <person name="Ashburner M."/>
            <person name="Henderson S.N."/>
            <person name="Sutton G.G."/>
            <person name="Wortman J.R."/>
            <person name="Yandell M.D."/>
            <person name="Zhang Q."/>
            <person name="Chen L.X."/>
            <person name="Brandon R.C."/>
            <person name="Rogers Y.-H.C."/>
            <person name="Blazej R.G."/>
            <person name="Champe M."/>
            <person name="Pfeiffer B.D."/>
            <person name="Wan K.H."/>
            <person name="Doyle C."/>
            <person name="Baxter E.G."/>
            <person name="Helt G."/>
            <person name="Nelson C.R."/>
            <person name="Miklos G.L.G."/>
            <person name="Abril J.F."/>
            <person name="Agbayani A."/>
            <person name="An H.-J."/>
            <person name="Andrews-Pfannkoch C."/>
            <person name="Baldwin D."/>
            <person name="Ballew R.M."/>
            <person name="Basu A."/>
            <person name="Baxendale J."/>
            <person name="Bayraktaroglu L."/>
            <person name="Beasley E.M."/>
            <person name="Beeson K.Y."/>
            <person name="Benos P.V."/>
            <person name="Berman B.P."/>
            <person name="Bhandari D."/>
            <person name="Bolshakov S."/>
            <person name="Borkova D."/>
            <person name="Botchan M.R."/>
            <person name="Bouck J."/>
            <person name="Brokstein P."/>
            <person name="Brottier P."/>
            <person name="Burtis K.C."/>
            <person name="Busam D.A."/>
            <person name="Butler H."/>
            <person name="Cadieu E."/>
            <person name="Center A."/>
            <person name="Chandra I."/>
            <person name="Cherry J.M."/>
            <person name="Cawley S."/>
            <person name="Dahlke C."/>
            <person name="Davenport L.B."/>
            <person name="Davies P."/>
            <person name="de Pablos B."/>
            <person name="Delcher A."/>
            <person name="Deng Z."/>
            <person name="Mays A.D."/>
            <person name="Dew I."/>
            <person name="Dietz S.M."/>
            <person name="Dodson K."/>
            <person name="Doup L.E."/>
            <person name="Downes M."/>
            <person name="Dugan-Rocha S."/>
            <person name="Dunkov B.C."/>
            <person name="Dunn P."/>
            <person name="Durbin K.J."/>
            <person name="Evangelista C.C."/>
            <person name="Ferraz C."/>
            <person name="Ferriera S."/>
            <person name="Fleischmann W."/>
            <person name="Fosler C."/>
            <person name="Gabrielian A.E."/>
            <person name="Garg N.S."/>
            <person name="Gelbart W.M."/>
            <person name="Glasser K."/>
            <person name="Glodek A."/>
            <person name="Gong F."/>
            <person name="Gorrell J.H."/>
            <person name="Gu Z."/>
            <person name="Guan P."/>
            <person name="Harris M."/>
            <person name="Harris N.L."/>
            <person name="Harvey D.A."/>
            <person name="Heiman T.J."/>
            <person name="Hernandez J.R."/>
            <person name="Houck J."/>
            <person name="Hostin D."/>
            <person name="Houston K.A."/>
            <person name="Howland T.J."/>
            <person name="Wei M.-H."/>
            <person name="Ibegwam C."/>
            <person name="Jalali M."/>
            <person name="Kalush F."/>
            <person name="Karpen G.H."/>
            <person name="Ke Z."/>
            <person name="Kennison J.A."/>
            <person name="Ketchum K.A."/>
            <person name="Kimmel B.E."/>
            <person name="Kodira C.D."/>
            <person name="Kraft C.L."/>
            <person name="Kravitz S."/>
            <person name="Kulp D."/>
            <person name="Lai Z."/>
            <person name="Lasko P."/>
            <person name="Lei Y."/>
            <person name="Levitsky A.A."/>
            <person name="Li J.H."/>
            <person name="Li Z."/>
            <person name="Liang Y."/>
            <person name="Lin X."/>
            <person name="Liu X."/>
            <person name="Mattei B."/>
            <person name="McIntosh T.C."/>
            <person name="McLeod M.P."/>
            <person name="McPherson D."/>
            <person name="Merkulov G."/>
            <person name="Milshina N.V."/>
            <person name="Mobarry C."/>
            <person name="Morris J."/>
            <person name="Moshrefi A."/>
            <person name="Mount S.M."/>
            <person name="Moy M."/>
            <person name="Murphy B."/>
            <person name="Murphy L."/>
            <person name="Muzny D.M."/>
            <person name="Nelson D.L."/>
            <person name="Nelson D.R."/>
            <person name="Nelson K.A."/>
            <person name="Nixon K."/>
            <person name="Nusskern D.R."/>
            <person name="Pacleb J.M."/>
            <person name="Palazzolo M."/>
            <person name="Pittman G.S."/>
            <person name="Pan S."/>
            <person name="Pollard J."/>
            <person name="Puri V."/>
            <person name="Reese M.G."/>
            <person name="Reinert K."/>
            <person name="Remington K."/>
            <person name="Saunders R.D.C."/>
            <person name="Scheeler F."/>
            <person name="Shen H."/>
            <person name="Shue B.C."/>
            <person name="Siden-Kiamos I."/>
            <person name="Simpson M."/>
            <person name="Skupski M.P."/>
            <person name="Smith T.J."/>
            <person name="Spier E."/>
            <person name="Spradling A.C."/>
            <person name="Stapleton M."/>
            <person name="Strong R."/>
            <person name="Sun E."/>
            <person name="Svirskas R."/>
            <person name="Tector C."/>
            <person name="Turner R."/>
            <person name="Venter E."/>
            <person name="Wang A.H."/>
            <person name="Wang X."/>
            <person name="Wang Z.-Y."/>
            <person name="Wassarman D.A."/>
            <person name="Weinstock G.M."/>
            <person name="Weissenbach J."/>
            <person name="Williams S.M."/>
            <person name="Woodage T."/>
            <person name="Worley K.C."/>
            <person name="Wu D."/>
            <person name="Yang S."/>
            <person name="Yao Q.A."/>
            <person name="Ye J."/>
            <person name="Yeh R.-F."/>
            <person name="Zaveri J.S."/>
            <person name="Zhan M."/>
            <person name="Zhang G."/>
            <person name="Zhao Q."/>
            <person name="Zheng L."/>
            <person name="Zheng X.H."/>
            <person name="Zhong F.N."/>
            <person name="Zhong W."/>
            <person name="Zhou X."/>
            <person name="Zhu S.C."/>
            <person name="Zhu X."/>
            <person name="Smith H.O."/>
            <person name="Gibbs R.A."/>
            <person name="Myers E.W."/>
            <person name="Rubin G.M."/>
            <person name="Venter J.C."/>
        </authorList>
    </citation>
    <scope>NUCLEOTIDE SEQUENCE [LARGE SCALE GENOMIC DNA]</scope>
    <source>
        <strain evidence="12">Berkeley</strain>
    </source>
</reference>
<reference evidence="12" key="3">
    <citation type="journal article" date="2002" name="Genome Biol.">
        <title>Annotation of the Drosophila melanogaster euchromatic genome: a systematic review.</title>
        <authorList>
            <person name="Misra S."/>
            <person name="Crosby M.A."/>
            <person name="Mungall C.J."/>
            <person name="Matthews B.B."/>
            <person name="Campbell K.S."/>
            <person name="Hradecky P."/>
            <person name="Huang Y."/>
            <person name="Kaminker J.S."/>
            <person name="Millburn G.H."/>
            <person name="Prochnik S.E."/>
            <person name="Smith C.D."/>
            <person name="Tupy J.L."/>
            <person name="Whitfield E.J."/>
            <person name="Bayraktaroglu L."/>
            <person name="Berman B.P."/>
            <person name="Bettencourt B.R."/>
            <person name="Celniker S.E."/>
            <person name="de Grey A.D.N.J."/>
            <person name="Drysdale R.A."/>
            <person name="Harris N.L."/>
            <person name="Richter J."/>
            <person name="Russo S."/>
            <person name="Schroeder A.J."/>
            <person name="Shu S.Q."/>
            <person name="Stapleton M."/>
            <person name="Yamada C."/>
            <person name="Ashburner M."/>
            <person name="Gelbart W.M."/>
            <person name="Rubin G.M."/>
            <person name="Lewis S.E."/>
        </authorList>
    </citation>
    <scope>GENOME REANNOTATION</scope>
    <source>
        <strain evidence="12">Berkeley</strain>
    </source>
</reference>
<reference evidence="9" key="4">
    <citation type="journal article" date="2009" name="Cell">
        <title>Variant ionotropic glutamate receptors as chemosensory receptors in Drosophila.</title>
        <authorList>
            <person name="Benton R."/>
            <person name="Vannice K.S."/>
            <person name="Gomez-Diaz C."/>
            <person name="Vosshall L.B."/>
        </authorList>
    </citation>
    <scope>SUBCELLULAR LOCATION</scope>
    <scope>TISSUE SPECIFICITY</scope>
</reference>
<reference evidence="9" key="5">
    <citation type="journal article" date="2015" name="Nature">
        <title>Drosophila ionotropic receptor 25a mediates circadian clock resetting by temperature.</title>
        <authorList>
            <person name="Chen C."/>
            <person name="Buhl E."/>
            <person name="Xu M."/>
            <person name="Croset V."/>
            <person name="Rees J.S."/>
            <person name="Lilley K.S."/>
            <person name="Benton R."/>
            <person name="Hodge J.J."/>
            <person name="Stanewsky R."/>
        </authorList>
    </citation>
    <scope>FUNCTION</scope>
    <scope>INTERACTION WITH NOCTE</scope>
    <scope>SUBCELLULAR LOCATION</scope>
    <scope>TISSUE SPECIFICITY</scope>
    <scope>DISRUPTION PHENOTYPE</scope>
    <scope>IDENTIFICATION BY MASS SPECTROMETRY</scope>
</reference>
<reference evidence="9" key="6">
    <citation type="journal article" date="2016" name="Elife">
        <title>The ionotropic receptors IR21a and IR25a mediate cool sensing in Drosophila.</title>
        <authorList>
            <person name="Ni L."/>
            <person name="Klein M."/>
            <person name="Svec K.V."/>
            <person name="Budelli G."/>
            <person name="Chang E.C."/>
            <person name="Ferrer A.J."/>
            <person name="Benton R."/>
            <person name="Samuel A.D."/>
            <person name="Garrity P.A."/>
        </authorList>
    </citation>
    <scope>FUNCTION</scope>
    <scope>SUBCELLULAR LOCATION</scope>
    <scope>TISSUE SPECIFICITY</scope>
    <scope>DISRUPTION PHENOTYPE</scope>
</reference>
<reference key="7">
    <citation type="journal article" date="2016" name="Curr. Biol.">
        <title>Humidity Sensing in Drosophila.</title>
        <authorList>
            <person name="Enjin A."/>
            <person name="Zaharieva E.E."/>
            <person name="Frank D.D."/>
            <person name="Mansourian S."/>
            <person name="Suh G.S."/>
            <person name="Gallio M."/>
            <person name="Stensmyr M.C."/>
        </authorList>
    </citation>
    <scope>FUNCTION</scope>
    <scope>DISRUPTION PHENOTYPE</scope>
</reference>
<reference key="8">
    <citation type="journal article" date="2016" name="Elife">
        <title>Distinct combinations of variant ionotropic glutamate receptors mediate thermosensation and hygrosensation in Drosophila.</title>
        <authorList>
            <person name="Knecht Z.A."/>
            <person name="Silbering A.F."/>
            <person name="Ni L."/>
            <person name="Klein M."/>
            <person name="Budelli G."/>
            <person name="Bell R."/>
            <person name="Abuin L."/>
            <person name="Ferrer A.J."/>
            <person name="Samuel A.D."/>
            <person name="Benton R."/>
            <person name="Garrity P.A."/>
        </authorList>
    </citation>
    <scope>FUNCTION</scope>
    <scope>TISSUE SPECIFICITY</scope>
    <scope>DISRUPTION PHENOTYPE</scope>
</reference>
<evidence type="ECO:0000255" key="1"/>
<evidence type="ECO:0000255" key="2">
    <source>
        <dbReference type="PROSITE-ProRule" id="PRU00498"/>
    </source>
</evidence>
<evidence type="ECO:0000269" key="3">
    <source>
    </source>
</evidence>
<evidence type="ECO:0000269" key="4">
    <source>
    </source>
</evidence>
<evidence type="ECO:0000269" key="5">
    <source>
    </source>
</evidence>
<evidence type="ECO:0000269" key="6">
    <source>
    </source>
</evidence>
<evidence type="ECO:0000269" key="7">
    <source>
    </source>
</evidence>
<evidence type="ECO:0000269" key="8">
    <source>
    </source>
</evidence>
<evidence type="ECO:0000305" key="9"/>
<evidence type="ECO:0000312" key="10">
    <source>
        <dbReference type="EMBL" id="ADU79032.1"/>
    </source>
</evidence>
<evidence type="ECO:0000312" key="11">
    <source>
        <dbReference type="FlyBase" id="FBgn0031634"/>
    </source>
</evidence>
<evidence type="ECO:0000312" key="12">
    <source>
        <dbReference type="Proteomes" id="UP000000803"/>
    </source>
</evidence>
<accession>E9NA96</accession>
<gene>
    <name evidence="11" type="primary">Ir25a</name>
    <name evidence="11" type="ORF">CG15627</name>
</gene>
<keyword id="KW-0085">Behavior</keyword>
<keyword id="KW-0090">Biological rhythms</keyword>
<keyword id="KW-1003">Cell membrane</keyword>
<keyword id="KW-0966">Cell projection</keyword>
<keyword id="KW-0325">Glycoprotein</keyword>
<keyword id="KW-0407">Ion channel</keyword>
<keyword id="KW-0406">Ion transport</keyword>
<keyword id="KW-1071">Ligand-gated ion channel</keyword>
<keyword id="KW-0472">Membrane</keyword>
<keyword id="KW-0552">Olfaction</keyword>
<keyword id="KW-0675">Receptor</keyword>
<keyword id="KW-1185">Reference proteome</keyword>
<keyword id="KW-0716">Sensory transduction</keyword>
<keyword id="KW-0732">Signal</keyword>
<keyword id="KW-0812">Transmembrane</keyword>
<keyword id="KW-1133">Transmembrane helix</keyword>
<keyword id="KW-0813">Transport</keyword>
<comment type="function">
    <text evidence="4 5 6 7 8">Integral part of various neural sensory systems in the antenna that provide the neural basis for the response to environmental changes in temperature (thermosensation), humidity (hygrosensation) and odor detection (PubMed:21220098, PubMed:27161501, PubMed:27656904). Required for odor-evoked electrophysiological responses in multiple neuron classes in the antenna and is likely to function as part of an olfactory receptor complex with Ir76a and Ir76b (PubMed:21220098). Together with Ir21a and Ir93a, mediates the response of the larval dorsal organ cool cells, a trio of cool-responsive neurons, to cooling and is required for cool avoidance behavior (PubMed:27126188, PubMed:27161501, PubMed:27656904). Required in chordonotal organ neurons for behavioral synchronization to low-amplitude temperature cycles and mediates circadian clock resetting by temperature (PubMed:26580016). Together with Ir40a and Ir93a, mediates the response of the hydrosensory sacculus neurons to changes in relative humidity, and is required for dry detection and humidiy preference behavior (PubMed:27161501, PubMed:27656904).</text>
</comment>
<comment type="subunit">
    <text evidence="5">Interacts with nocte.</text>
</comment>
<comment type="subcellular location">
    <subcellularLocation>
        <location evidence="9">Cell membrane</location>
        <topology evidence="1">Multi-pass membrane protein</topology>
    </subcellularLocation>
    <subcellularLocation>
        <location evidence="3">Cell projection</location>
        <location evidence="3">Axon</location>
    </subcellularLocation>
    <subcellularLocation>
        <location evidence="3 5 6">Cell projection</location>
        <location evidence="3 5 6">Dendrite</location>
    </subcellularLocation>
    <subcellularLocation>
        <location evidence="3 5">Perikaryon</location>
    </subcellularLocation>
    <subcellularLocation>
        <location evidence="3">Cell projection</location>
        <location evidence="3">Cilium</location>
    </subcellularLocation>
    <text evidence="3 6">Low levels detected in the axon segment adjacent to the perikaryon in some sensory neurons of the antenna but not detected along axons as they enter the brain or at synapses within antennal lobe glomeruli. In coeloconic neurons, prominently expressed both in the perikaryon and in the distal tip of the dendrite which corresponds to the ciliated outer dendritic segment innervating the sensory hair. Relatively low levels detected in inner dendrites (PubMed:19135896). Detected in dendritic bulbs of the dorsal organ cool cells (PubMed:27126188).</text>
</comment>
<comment type="tissue specificity">
    <text evidence="3 4 5 6 8">In the antenna, detected in neurons of the arista and also detected in sacculus neurons which innervate the first and second chambers (at protein level) (PubMed:19135896, PubMed:21220098, PubMed:27656904). Throughout the main body of the antenna, expressed in neurons which innervate the coeloconic class of olfactory sensilla (at protein level) (PubMed:19135896, PubMed:21220098). Expressed in multiple cells of the dorsal organ including the dorsal organ cool cells (at protein level) (PubMed:27126188, PubMed:27656904). Detected in femur and retina (PubMed:26580016). Expressed in a subset of femur chordonotal neurons and antennal Johnston's Organ neurons (PubMed:26580016).</text>
</comment>
<comment type="disruption phenotype">
    <text evidence="4 5 6 7 8">No visible phenotype (PubMed:21220098). Viable and fertile but their response to environmental cues such as temperature, humidity and odorants is impaired (PubMed:21220098, PubMed:26580016, PubMed:27126188, PubMed:27161501, PubMed:27656904). Response of ac4 coeloconic sensilla neurons to agonist phenylethylamine and of ac2 sensilla neurons to agonist 1,4-diaminobutane is abolished (PubMed:21220098). Response of dorsal organ cool cells to changes in temperature is abolished and consequently larvae fail to avoid cool temperatures (PubMed:27126188, PubMed:27161501, PubMed:27656904). Response of sacculus neurons to changes in humidity is also abolished and consequently larvae fail to move towards their preferred humidity (PubMed:27161501, PubMed:27656904). Failure to synchronize in constant light or constant dark to shallow temperature cycles with an amplitude of 2 degrees Celsius (PubMed:26580016). In constant light, mutants display constant activity throughout the temperature cycle in contrast to controls which show a clear activity peak in the second part of the warm period before and after a 6 hour shift of the temperature cycle (PubMed:26580016). In constant dark, mutants do not shift their evening peak during the temperature cycle in contrast to controls which advance or delay their evening activity peak during phase-advanced or phase-delayed temperature cycles (PubMed:26580016). Barely detectable levels of circadian rhythm protein tim in dorsal neurons DN1 and DN2 (PubMed:26580016). RNAi-mediated knockdown in chordonotal neurons disrupts synchronization of locomotor activity rhythms with temperature cycles (PubMed:26580016).</text>
</comment>
<comment type="similarity">
    <text evidence="1">Belongs to the glutamate-gated ion channel (TC 1.A.10.1) family.</text>
</comment>
<organism evidence="10">
    <name type="scientific">Drosophila melanogaster</name>
    <name type="common">Fruit fly</name>
    <dbReference type="NCBI Taxonomy" id="7227"/>
    <lineage>
        <taxon>Eukaryota</taxon>
        <taxon>Metazoa</taxon>
        <taxon>Ecdysozoa</taxon>
        <taxon>Arthropoda</taxon>
        <taxon>Hexapoda</taxon>
        <taxon>Insecta</taxon>
        <taxon>Pterygota</taxon>
        <taxon>Neoptera</taxon>
        <taxon>Endopterygota</taxon>
        <taxon>Diptera</taxon>
        <taxon>Brachycera</taxon>
        <taxon>Muscomorpha</taxon>
        <taxon>Ephydroidea</taxon>
        <taxon>Drosophilidae</taxon>
        <taxon>Drosophila</taxon>
        <taxon>Sophophora</taxon>
    </lineage>
</organism>
<sequence>MILMNPKTSKILWLLGFLSLLSSFSLEIAAQTTQNINVLFINEVDNEPAAKAVEVVLTYLKKNIRYGLSVQLDSIEANKSDAKVLLEAICNKYATSIEKKQTPHLILDTTKSGIASETVKSFTQALGLPTISASYGQQGDLRQWRDLDEAKQKYLLQVMPPADIIPEAIRSIVIHMNITNAAILYDDSFVMDHKYKSLLQNIQTRHVITAIAKDGKREREEQIEKLRNLDINNFFILGTLQSIRMVLESVKPAYFERNFAWHAITQNEGEISSQRDNATIMFMKPMAYTQYRDRLGLLRTTYNLNEEPQLSSAFYFDLALRSFLTIKEMLQSGAWPKDMEYLNCDDFQGGNTPQRNLDLRDYFTKITEPTSYGTFDLVTQSTQPFNGHSFMKFEMDINVLQIRGGSSVNSKSIGKWISGLNSELIVKDEEQMKNLTADTVYRIFTVVQAPFIMRDETAPKGYKGYCIDLINEIAAIVHFDYTIQEVEDGKFGNMDENGQWNGIVKKLMDKQADIGLGSMSVMAEREIVIDFTVPYYDLVGITIMMQRPSSPSSLFKFLTVLETNVWLCILAAYFFTSFLMWIFDRWSPYSYQNNREKYKDDEEKREFNLKECLWFCMTSLTPQGGGEAPKNLSGRLVAATWWLFGFIIIASYTANLAAFLTVSRLDTPVESLDDLAKQYKILYAPLNGSSAMTYFERMSNIEQMFYEIWKDLSLNDSLTAVERSKLAVWDYPVSDKYTKMWQAMQEAKLPATLDEAVARVRNSTAATGFAFLGDATDIRYLQLTNCDLQVVGEEFSRKPYAIAVQQGSHLKDQFNNAILTLLNKRQLEKLKEKWWKNDEALAKCDKPEDQSDGISIQNIGGVFIVIFVGIGMACITLVFEYWWYRYRKNPRIIDVAEANAERSNAADHPGKLVDGVILGHSGEKFEKSKAALRPRFNQYPATFKPRF</sequence>
<dbReference type="EMBL" id="HQ600588">
    <property type="protein sequence ID" value="ADU79032.1"/>
    <property type="molecule type" value="mRNA"/>
</dbReference>
<dbReference type="EMBL" id="AE014134">
    <property type="protein sequence ID" value="AGB92585.1"/>
    <property type="molecule type" value="Genomic_DNA"/>
</dbReference>
<dbReference type="RefSeq" id="NP_001260049.1">
    <property type="nucleotide sequence ID" value="NM_001273120.1"/>
</dbReference>
<dbReference type="SMR" id="E9NA96"/>
<dbReference type="FunCoup" id="E9NA96">
    <property type="interactions" value="12"/>
</dbReference>
<dbReference type="STRING" id="7227.FBpp0304756"/>
<dbReference type="TCDB" id="1.A.10.1.14">
    <property type="family name" value="the glutamate-gated ion channel (gic) family of neurotransmitter receptors"/>
</dbReference>
<dbReference type="GlyCosmos" id="E9NA96">
    <property type="glycosylation" value="7 sites, No reported glycans"/>
</dbReference>
<dbReference type="GlyGen" id="E9NA96">
    <property type="glycosylation" value="7 sites"/>
</dbReference>
<dbReference type="PaxDb" id="7227-FBpp0304756"/>
<dbReference type="DNASU" id="33683"/>
<dbReference type="EnsemblMetazoa" id="FBtr0332480">
    <property type="protein sequence ID" value="FBpp0304756"/>
    <property type="gene ID" value="FBgn0031634"/>
</dbReference>
<dbReference type="GeneID" id="33683"/>
<dbReference type="KEGG" id="dme:Dmel_CG15627"/>
<dbReference type="AGR" id="FB:FBgn0031634"/>
<dbReference type="CTD" id="33683"/>
<dbReference type="FlyBase" id="FBgn0031634">
    <property type="gene designation" value="Ir25a"/>
</dbReference>
<dbReference type="VEuPathDB" id="VectorBase:FBgn0031634"/>
<dbReference type="eggNOG" id="KOG1052">
    <property type="taxonomic scope" value="Eukaryota"/>
</dbReference>
<dbReference type="GeneTree" id="ENSGT00940000174434"/>
<dbReference type="InParanoid" id="E9NA96"/>
<dbReference type="OMA" id="DTFVMDH"/>
<dbReference type="OrthoDB" id="5984008at2759"/>
<dbReference type="Reactome" id="R-DME-204005">
    <property type="pathway name" value="COPII-mediated vesicle transport"/>
</dbReference>
<dbReference type="Reactome" id="R-DME-399710">
    <property type="pathway name" value="Activation of AMPA receptors"/>
</dbReference>
<dbReference type="Reactome" id="R-DME-416993">
    <property type="pathway name" value="Trafficking of GluR2-containing AMPA receptors"/>
</dbReference>
<dbReference type="Reactome" id="R-DME-438066">
    <property type="pathway name" value="Unblocking of NMDA receptors, glutamate binding and activation"/>
</dbReference>
<dbReference type="Reactome" id="R-DME-5694530">
    <property type="pathway name" value="Cargo concentration in the ER"/>
</dbReference>
<dbReference type="Reactome" id="R-DME-8849932">
    <property type="pathway name" value="Synaptic adhesion-like molecules"/>
</dbReference>
<dbReference type="BioGRID-ORCS" id="33683">
    <property type="hits" value="0 hits in 1 CRISPR screen"/>
</dbReference>
<dbReference type="GenomeRNAi" id="33683"/>
<dbReference type="PRO" id="PR:E9NA96"/>
<dbReference type="Proteomes" id="UP000000803">
    <property type="component" value="Chromosome 2L"/>
</dbReference>
<dbReference type="Bgee" id="FBgn0031634">
    <property type="expression patterns" value="Expressed in gustatory receptor neuron (Drosophila) in insect leg and 35 other cell types or tissues"/>
</dbReference>
<dbReference type="ExpressionAtlas" id="E9NA96">
    <property type="expression patterns" value="baseline and differential"/>
</dbReference>
<dbReference type="GO" id="GO:0030424">
    <property type="term" value="C:axon"/>
    <property type="evidence" value="ECO:0007669"/>
    <property type="project" value="UniProtKB-SubCell"/>
</dbReference>
<dbReference type="GO" id="GO:0005929">
    <property type="term" value="C:cilium"/>
    <property type="evidence" value="ECO:0000314"/>
    <property type="project" value="FlyBase"/>
</dbReference>
<dbReference type="GO" id="GO:0016020">
    <property type="term" value="C:membrane"/>
    <property type="evidence" value="ECO:0000255"/>
    <property type="project" value="FlyBase"/>
</dbReference>
<dbReference type="GO" id="GO:0043204">
    <property type="term" value="C:perikaryon"/>
    <property type="evidence" value="ECO:0007669"/>
    <property type="project" value="UniProtKB-SubCell"/>
</dbReference>
<dbReference type="GO" id="GO:0005886">
    <property type="term" value="C:plasma membrane"/>
    <property type="evidence" value="ECO:0000318"/>
    <property type="project" value="GO_Central"/>
</dbReference>
<dbReference type="GO" id="GO:0071683">
    <property type="term" value="C:sensory dendrite"/>
    <property type="evidence" value="ECO:0000314"/>
    <property type="project" value="FlyBase"/>
</dbReference>
<dbReference type="GO" id="GO:0045202">
    <property type="term" value="C:synapse"/>
    <property type="evidence" value="ECO:0007669"/>
    <property type="project" value="GOC"/>
</dbReference>
<dbReference type="GO" id="GO:0015026">
    <property type="term" value="F:coreceptor activity"/>
    <property type="evidence" value="ECO:0000315"/>
    <property type="project" value="FlyBase"/>
</dbReference>
<dbReference type="GO" id="GO:0008066">
    <property type="term" value="F:glutamate receptor activity"/>
    <property type="evidence" value="ECO:0000318"/>
    <property type="project" value="GO_Central"/>
</dbReference>
<dbReference type="GO" id="GO:0015276">
    <property type="term" value="F:ligand-gated monoatomic ion channel activity"/>
    <property type="evidence" value="ECO:0000255"/>
    <property type="project" value="FlyBase"/>
</dbReference>
<dbReference type="GO" id="GO:1904315">
    <property type="term" value="F:transmitter-gated monoatomic ion channel activity involved in regulation of postsynaptic membrane potential"/>
    <property type="evidence" value="ECO:0000318"/>
    <property type="project" value="GO_Central"/>
</dbReference>
<dbReference type="GO" id="GO:0050907">
    <property type="term" value="P:detection of chemical stimulus involved in sensory perception"/>
    <property type="evidence" value="ECO:0000270"/>
    <property type="project" value="FlyBase"/>
</dbReference>
<dbReference type="GO" id="GO:0050911">
    <property type="term" value="P:detection of chemical stimulus involved in sensory perception of smell"/>
    <property type="evidence" value="ECO:0000315"/>
    <property type="project" value="FlyBase"/>
</dbReference>
<dbReference type="GO" id="GO:0009649">
    <property type="term" value="P:entrainment of circadian clock"/>
    <property type="evidence" value="ECO:0000315"/>
    <property type="project" value="FlyBase"/>
</dbReference>
<dbReference type="GO" id="GO:0050804">
    <property type="term" value="P:modulation of chemical synaptic transmission"/>
    <property type="evidence" value="ECO:0000318"/>
    <property type="project" value="GO_Central"/>
</dbReference>
<dbReference type="GO" id="GO:0048511">
    <property type="term" value="P:rhythmic process"/>
    <property type="evidence" value="ECO:0007669"/>
    <property type="project" value="UniProtKB-KW"/>
</dbReference>
<dbReference type="GO" id="GO:0035249">
    <property type="term" value="P:synaptic transmission, glutamatergic"/>
    <property type="evidence" value="ECO:0000318"/>
    <property type="project" value="GO_Central"/>
</dbReference>
<dbReference type="GO" id="GO:0010378">
    <property type="term" value="P:temperature compensation of the circadian clock"/>
    <property type="evidence" value="ECO:0000315"/>
    <property type="project" value="FlyBase"/>
</dbReference>
<dbReference type="GO" id="GO:0019226">
    <property type="term" value="P:transmission of nerve impulse"/>
    <property type="evidence" value="ECO:0000315"/>
    <property type="project" value="FlyBase"/>
</dbReference>
<dbReference type="CDD" id="cd06383">
    <property type="entry name" value="PBP1_iGluR_AMPA_Like"/>
    <property type="match status" value="1"/>
</dbReference>
<dbReference type="CDD" id="cd13717">
    <property type="entry name" value="PBP2_iGluR_putative"/>
    <property type="match status" value="1"/>
</dbReference>
<dbReference type="FunFam" id="1.10.287.70:FF:000080">
    <property type="entry name" value="Glutamate receptor ionotropic, kainate"/>
    <property type="match status" value="1"/>
</dbReference>
<dbReference type="FunFam" id="3.40.190.10:FF:000142">
    <property type="entry name" value="Ionotropic receptor 25a"/>
    <property type="match status" value="1"/>
</dbReference>
<dbReference type="FunFam" id="3.40.190.10:FF:000153">
    <property type="entry name" value="Ionotropic receptor 25a"/>
    <property type="match status" value="1"/>
</dbReference>
<dbReference type="FunFam" id="3.40.190.10:FF:000176">
    <property type="entry name" value="Ionotropic receptor 25a"/>
    <property type="match status" value="1"/>
</dbReference>
<dbReference type="FunFam" id="3.40.50.2300:FF:000384">
    <property type="entry name" value="Ionotropic receptor 25a"/>
    <property type="match status" value="1"/>
</dbReference>
<dbReference type="Gene3D" id="1.10.287.70">
    <property type="match status" value="1"/>
</dbReference>
<dbReference type="Gene3D" id="3.40.50.2300">
    <property type="match status" value="1"/>
</dbReference>
<dbReference type="Gene3D" id="3.40.190.10">
    <property type="entry name" value="Periplasmic binding protein-like II"/>
    <property type="match status" value="2"/>
</dbReference>
<dbReference type="InterPro" id="IPR019594">
    <property type="entry name" value="Glu/Gly-bd"/>
</dbReference>
<dbReference type="InterPro" id="IPR001508">
    <property type="entry name" value="Iono_Glu_rcpt_met"/>
</dbReference>
<dbReference type="InterPro" id="IPR015683">
    <property type="entry name" value="Ionotropic_Glu_rcpt"/>
</dbReference>
<dbReference type="InterPro" id="IPR001320">
    <property type="entry name" value="Iontro_rcpt_C"/>
</dbReference>
<dbReference type="InterPro" id="IPR013099">
    <property type="entry name" value="K_chnl_dom"/>
</dbReference>
<dbReference type="InterPro" id="IPR028082">
    <property type="entry name" value="Peripla_BP_I"/>
</dbReference>
<dbReference type="PANTHER" id="PTHR18966">
    <property type="entry name" value="IONOTROPIC GLUTAMATE RECEPTOR"/>
    <property type="match status" value="1"/>
</dbReference>
<dbReference type="Pfam" id="PF07885">
    <property type="entry name" value="Ion_trans_2"/>
    <property type="match status" value="1"/>
</dbReference>
<dbReference type="Pfam" id="PF00060">
    <property type="entry name" value="Lig_chan"/>
    <property type="match status" value="1"/>
</dbReference>
<dbReference type="Pfam" id="PF10613">
    <property type="entry name" value="Lig_chan-Glu_bd"/>
    <property type="match status" value="1"/>
</dbReference>
<dbReference type="PRINTS" id="PR00177">
    <property type="entry name" value="NMDARECEPTOR"/>
</dbReference>
<dbReference type="SMART" id="SM00918">
    <property type="entry name" value="Lig_chan-Glu_bd"/>
    <property type="match status" value="1"/>
</dbReference>
<dbReference type="SMART" id="SM00079">
    <property type="entry name" value="PBPe"/>
    <property type="match status" value="1"/>
</dbReference>
<dbReference type="SUPFAM" id="SSF53822">
    <property type="entry name" value="Periplasmic binding protein-like I"/>
    <property type="match status" value="1"/>
</dbReference>
<dbReference type="SUPFAM" id="SSF53850">
    <property type="entry name" value="Periplasmic binding protein-like II"/>
    <property type="match status" value="1"/>
</dbReference>
<dbReference type="SUPFAM" id="SSF81324">
    <property type="entry name" value="Voltage-gated potassium channels"/>
    <property type="match status" value="1"/>
</dbReference>
<protein>
    <recommendedName>
        <fullName evidence="10">Ionotropic receptor 25a</fullName>
    </recommendedName>
</protein>
<feature type="signal peptide" evidence="1">
    <location>
        <begin position="1"/>
        <end position="30"/>
    </location>
</feature>
<feature type="chain" id="PRO_5007189792" description="Ionotropic receptor 25a">
    <location>
        <begin position="31"/>
        <end position="947"/>
    </location>
</feature>
<feature type="topological domain" description="Extracellular" evidence="9">
    <location>
        <begin position="31"/>
        <end position="562"/>
    </location>
</feature>
<feature type="transmembrane region" description="Helical" evidence="1">
    <location>
        <begin position="563"/>
        <end position="583"/>
    </location>
</feature>
<feature type="topological domain" description="Cytoplasmic" evidence="9">
    <location>
        <begin position="584"/>
        <end position="641"/>
    </location>
</feature>
<feature type="transmembrane region" description="Helical" evidence="1">
    <location>
        <begin position="642"/>
        <end position="662"/>
    </location>
</feature>
<feature type="topological domain" description="Extracellular" evidence="9">
    <location>
        <begin position="663"/>
        <end position="858"/>
    </location>
</feature>
<feature type="transmembrane region" description="Helical" evidence="1">
    <location>
        <begin position="859"/>
        <end position="879"/>
    </location>
</feature>
<feature type="topological domain" description="Cytoplasmic" evidence="9">
    <location>
        <begin position="880"/>
        <end position="947"/>
    </location>
</feature>
<feature type="glycosylation site" description="N-linked (GlcNAc...) asparagine" evidence="2">
    <location>
        <position position="78"/>
    </location>
</feature>
<feature type="glycosylation site" description="N-linked (GlcNAc...) asparagine" evidence="2">
    <location>
        <position position="177"/>
    </location>
</feature>
<feature type="glycosylation site" description="N-linked (GlcNAc...) asparagine" evidence="2">
    <location>
        <position position="277"/>
    </location>
</feature>
<feature type="glycosylation site" description="N-linked (GlcNAc...) asparagine" evidence="2">
    <location>
        <position position="434"/>
    </location>
</feature>
<feature type="glycosylation site" description="N-linked (GlcNAc...) asparagine" evidence="2">
    <location>
        <position position="687"/>
    </location>
</feature>
<feature type="glycosylation site" description="N-linked (GlcNAc...) asparagine" evidence="2">
    <location>
        <position position="715"/>
    </location>
</feature>
<feature type="glycosylation site" description="N-linked (GlcNAc...) asparagine" evidence="2">
    <location>
        <position position="762"/>
    </location>
</feature>
<proteinExistence type="evidence at protein level"/>
<name>IR25A_DROME</name>